<keyword id="KW-0134">Cell wall</keyword>
<keyword id="KW-0903">Direct protein sequencing</keyword>
<keyword id="KW-1015">Disulfide bond</keyword>
<keyword id="KW-0964">Secreted</keyword>
<protein>
    <recommendedName>
        <fullName>Thaumatin-like protein 2</fullName>
    </recommendedName>
</protein>
<accession>P85340</accession>
<reference evidence="6" key="1">
    <citation type="journal article" date="2009" name="J. Plant Physiol.">
        <title>Analysis of the soluble cell wall proteome of gymnosperms.</title>
        <authorList>
            <person name="Uzal E.N."/>
            <person name="Gomez-Ros L.V."/>
            <person name="Hernandez J.A."/>
            <person name="Pedreno M.A."/>
            <person name="Cuello J."/>
            <person name="Ros Barcelo A."/>
        </authorList>
    </citation>
    <scope>PROTEIN SEQUENCE</scope>
    <scope>SUBCELLULAR LOCATION</scope>
    <source>
        <strain evidence="4">PC-1008</strain>
        <tissue evidence="4">Callus</tissue>
    </source>
</reference>
<organism>
    <name type="scientific">Taxus baccata</name>
    <name type="common">English yew</name>
    <dbReference type="NCBI Taxonomy" id="25629"/>
    <lineage>
        <taxon>Eukaryota</taxon>
        <taxon>Viridiplantae</taxon>
        <taxon>Streptophyta</taxon>
        <taxon>Embryophyta</taxon>
        <taxon>Tracheophyta</taxon>
        <taxon>Spermatophyta</taxon>
        <taxon>Pinopsida</taxon>
        <taxon>Pinidae</taxon>
        <taxon>Conifers II</taxon>
        <taxon>Cupressales</taxon>
        <taxon>Taxaceae</taxon>
        <taxon>Taxus</taxon>
    </lineage>
</organism>
<sequence length="11" mass="1272">NQCPQAYSYAK</sequence>
<proteinExistence type="evidence at protein level"/>
<dbReference type="GO" id="GO:0005576">
    <property type="term" value="C:extracellular region"/>
    <property type="evidence" value="ECO:0007669"/>
    <property type="project" value="UniProtKB-SubCell"/>
</dbReference>
<feature type="chain" id="PRO_0000314648" description="Thaumatin-like protein 2">
    <location>
        <begin position="1" status="less than"/>
        <end position="11" status="greater than"/>
    </location>
</feature>
<feature type="disulfide bond" evidence="2">
    <location>
        <begin status="unknown"/>
        <end position="3"/>
    </location>
</feature>
<feature type="non-terminal residue" evidence="5">
    <location>
        <position position="1"/>
    </location>
</feature>
<feature type="non-terminal residue" evidence="5">
    <location>
        <position position="11"/>
    </location>
</feature>
<name>TLP2_TAXBA</name>
<evidence type="ECO:0000250" key="1">
    <source>
        <dbReference type="UniProtKB" id="O80327"/>
    </source>
</evidence>
<evidence type="ECO:0000250" key="2">
    <source>
        <dbReference type="UniProtKB" id="P33679"/>
    </source>
</evidence>
<evidence type="ECO:0000255" key="3"/>
<evidence type="ECO:0000269" key="4">
    <source>
    </source>
</evidence>
<evidence type="ECO:0000303" key="5">
    <source>
    </source>
</evidence>
<evidence type="ECO:0000305" key="6"/>
<comment type="subcellular location">
    <subcellularLocation>
        <location evidence="1">Secreted</location>
    </subcellularLocation>
    <subcellularLocation>
        <location evidence="4">Secreted</location>
        <location evidence="4">Cell wall</location>
    </subcellularLocation>
</comment>
<comment type="similarity">
    <text evidence="3">Belongs to the thaumatin family.</text>
</comment>